<accession>A5UF74</accession>
<proteinExistence type="inferred from homology"/>
<dbReference type="EC" id="2.4.2.7" evidence="1"/>
<dbReference type="EMBL" id="CP000672">
    <property type="protein sequence ID" value="ABQ99429.1"/>
    <property type="molecule type" value="Genomic_DNA"/>
</dbReference>
<dbReference type="SMR" id="A5UF74"/>
<dbReference type="KEGG" id="hiq:CGSHiGG_01855"/>
<dbReference type="HOGENOM" id="CLU_063339_3_0_6"/>
<dbReference type="UniPathway" id="UPA00588">
    <property type="reaction ID" value="UER00646"/>
</dbReference>
<dbReference type="Proteomes" id="UP000001990">
    <property type="component" value="Chromosome"/>
</dbReference>
<dbReference type="GO" id="GO:0005829">
    <property type="term" value="C:cytosol"/>
    <property type="evidence" value="ECO:0007669"/>
    <property type="project" value="TreeGrafter"/>
</dbReference>
<dbReference type="GO" id="GO:0003999">
    <property type="term" value="F:adenine phosphoribosyltransferase activity"/>
    <property type="evidence" value="ECO:0007669"/>
    <property type="project" value="UniProtKB-UniRule"/>
</dbReference>
<dbReference type="GO" id="GO:0006168">
    <property type="term" value="P:adenine salvage"/>
    <property type="evidence" value="ECO:0007669"/>
    <property type="project" value="InterPro"/>
</dbReference>
<dbReference type="GO" id="GO:0044209">
    <property type="term" value="P:AMP salvage"/>
    <property type="evidence" value="ECO:0007669"/>
    <property type="project" value="UniProtKB-UniRule"/>
</dbReference>
<dbReference type="GO" id="GO:0006166">
    <property type="term" value="P:purine ribonucleoside salvage"/>
    <property type="evidence" value="ECO:0007669"/>
    <property type="project" value="UniProtKB-KW"/>
</dbReference>
<dbReference type="CDD" id="cd06223">
    <property type="entry name" value="PRTases_typeI"/>
    <property type="match status" value="1"/>
</dbReference>
<dbReference type="FunFam" id="3.40.50.2020:FF:000004">
    <property type="entry name" value="Adenine phosphoribosyltransferase"/>
    <property type="match status" value="1"/>
</dbReference>
<dbReference type="Gene3D" id="3.40.50.2020">
    <property type="match status" value="1"/>
</dbReference>
<dbReference type="HAMAP" id="MF_00004">
    <property type="entry name" value="Aden_phosphoribosyltr"/>
    <property type="match status" value="1"/>
</dbReference>
<dbReference type="InterPro" id="IPR005764">
    <property type="entry name" value="Ade_phspho_trans"/>
</dbReference>
<dbReference type="InterPro" id="IPR050120">
    <property type="entry name" value="Adenine_PRTase"/>
</dbReference>
<dbReference type="InterPro" id="IPR000836">
    <property type="entry name" value="PRibTrfase_dom"/>
</dbReference>
<dbReference type="InterPro" id="IPR029057">
    <property type="entry name" value="PRTase-like"/>
</dbReference>
<dbReference type="NCBIfam" id="TIGR01090">
    <property type="entry name" value="apt"/>
    <property type="match status" value="1"/>
</dbReference>
<dbReference type="NCBIfam" id="NF002632">
    <property type="entry name" value="PRK02304.1-1"/>
    <property type="match status" value="1"/>
</dbReference>
<dbReference type="NCBIfam" id="NF002634">
    <property type="entry name" value="PRK02304.1-3"/>
    <property type="match status" value="1"/>
</dbReference>
<dbReference type="NCBIfam" id="NF002636">
    <property type="entry name" value="PRK02304.1-5"/>
    <property type="match status" value="1"/>
</dbReference>
<dbReference type="PANTHER" id="PTHR11776">
    <property type="entry name" value="ADENINE PHOSPHORIBOSYLTRANSFERASE"/>
    <property type="match status" value="1"/>
</dbReference>
<dbReference type="PANTHER" id="PTHR11776:SF7">
    <property type="entry name" value="PHOSPHORIBOSYLTRANSFERASE DOMAIN-CONTAINING PROTEIN"/>
    <property type="match status" value="1"/>
</dbReference>
<dbReference type="Pfam" id="PF00156">
    <property type="entry name" value="Pribosyltran"/>
    <property type="match status" value="1"/>
</dbReference>
<dbReference type="SUPFAM" id="SSF53271">
    <property type="entry name" value="PRTase-like"/>
    <property type="match status" value="1"/>
</dbReference>
<dbReference type="PROSITE" id="PS00103">
    <property type="entry name" value="PUR_PYR_PR_TRANSFER"/>
    <property type="match status" value="1"/>
</dbReference>
<feature type="chain" id="PRO_1000000292" description="Adenine phosphoribosyltransferase">
    <location>
        <begin position="1"/>
        <end position="180"/>
    </location>
</feature>
<gene>
    <name evidence="1" type="primary">apt</name>
    <name type="ordered locus">CGSHiGG_01855</name>
</gene>
<protein>
    <recommendedName>
        <fullName evidence="1">Adenine phosphoribosyltransferase</fullName>
        <shortName evidence="1">APRT</shortName>
        <ecNumber evidence="1">2.4.2.7</ecNumber>
    </recommendedName>
</protein>
<keyword id="KW-0963">Cytoplasm</keyword>
<keyword id="KW-0328">Glycosyltransferase</keyword>
<keyword id="KW-0660">Purine salvage</keyword>
<keyword id="KW-0808">Transferase</keyword>
<name>APT_HAEIG</name>
<evidence type="ECO:0000255" key="1">
    <source>
        <dbReference type="HAMAP-Rule" id="MF_00004"/>
    </source>
</evidence>
<comment type="function">
    <text evidence="1">Catalyzes a salvage reaction resulting in the formation of AMP, that is energically less costly than de novo synthesis.</text>
</comment>
<comment type="catalytic activity">
    <reaction evidence="1">
        <text>AMP + diphosphate = 5-phospho-alpha-D-ribose 1-diphosphate + adenine</text>
        <dbReference type="Rhea" id="RHEA:16609"/>
        <dbReference type="ChEBI" id="CHEBI:16708"/>
        <dbReference type="ChEBI" id="CHEBI:33019"/>
        <dbReference type="ChEBI" id="CHEBI:58017"/>
        <dbReference type="ChEBI" id="CHEBI:456215"/>
        <dbReference type="EC" id="2.4.2.7"/>
    </reaction>
</comment>
<comment type="pathway">
    <text evidence="1">Purine metabolism; AMP biosynthesis via salvage pathway; AMP from adenine: step 1/1.</text>
</comment>
<comment type="subunit">
    <text evidence="1">Homodimer.</text>
</comment>
<comment type="subcellular location">
    <subcellularLocation>
        <location evidence="1">Cytoplasm</location>
    </subcellularLocation>
</comment>
<comment type="similarity">
    <text evidence="1">Belongs to the purine/pyrimidine phosphoribosyltransferase family.</text>
</comment>
<sequence length="180" mass="19710">MTTQLDLIKSSIKSIPNYPKEGIIFRDITTLLEVPAAFKATIDLIVEQYRDKGITKVLGTESRGFIFGAPVALALGLPFELVRKPKKLPRETISQSYQLEYGQDTLEMHVDAISEGDNVLIIDDLLATGGTVEATVKLVQRLGGAVKHAAFVINLPELGGEKRLNNLGVDCYTLVNFEGH</sequence>
<reference key="1">
    <citation type="journal article" date="2007" name="Genome Biol.">
        <title>Characterization and modeling of the Haemophilus influenzae core and supragenomes based on the complete genomic sequences of Rd and 12 clinical nontypeable strains.</title>
        <authorList>
            <person name="Hogg J.S."/>
            <person name="Hu F.Z."/>
            <person name="Janto B."/>
            <person name="Boissy R."/>
            <person name="Hayes J."/>
            <person name="Keefe R."/>
            <person name="Post J.C."/>
            <person name="Ehrlich G.D."/>
        </authorList>
    </citation>
    <scope>NUCLEOTIDE SEQUENCE [LARGE SCALE GENOMIC DNA]</scope>
    <source>
        <strain>PittGG</strain>
    </source>
</reference>
<organism>
    <name type="scientific">Haemophilus influenzae (strain PittGG)</name>
    <dbReference type="NCBI Taxonomy" id="374931"/>
    <lineage>
        <taxon>Bacteria</taxon>
        <taxon>Pseudomonadati</taxon>
        <taxon>Pseudomonadota</taxon>
        <taxon>Gammaproteobacteria</taxon>
        <taxon>Pasteurellales</taxon>
        <taxon>Pasteurellaceae</taxon>
        <taxon>Haemophilus</taxon>
    </lineage>
</organism>